<reference key="1">
    <citation type="journal article" date="2013" name="Nature">
        <title>The zebrafish reference genome sequence and its relationship to the human genome.</title>
        <authorList>
            <person name="Howe K."/>
            <person name="Clark M.D."/>
            <person name="Torroja C.F."/>
            <person name="Torrance J."/>
            <person name="Berthelot C."/>
            <person name="Muffato M."/>
            <person name="Collins J.E."/>
            <person name="Humphray S."/>
            <person name="McLaren K."/>
            <person name="Matthews L."/>
            <person name="McLaren S."/>
            <person name="Sealy I."/>
            <person name="Caccamo M."/>
            <person name="Churcher C."/>
            <person name="Scott C."/>
            <person name="Barrett J.C."/>
            <person name="Koch R."/>
            <person name="Rauch G.J."/>
            <person name="White S."/>
            <person name="Chow W."/>
            <person name="Kilian B."/>
            <person name="Quintais L.T."/>
            <person name="Guerra-Assuncao J.A."/>
            <person name="Zhou Y."/>
            <person name="Gu Y."/>
            <person name="Yen J."/>
            <person name="Vogel J.H."/>
            <person name="Eyre T."/>
            <person name="Redmond S."/>
            <person name="Banerjee R."/>
            <person name="Chi J."/>
            <person name="Fu B."/>
            <person name="Langley E."/>
            <person name="Maguire S.F."/>
            <person name="Laird G.K."/>
            <person name="Lloyd D."/>
            <person name="Kenyon E."/>
            <person name="Donaldson S."/>
            <person name="Sehra H."/>
            <person name="Almeida-King J."/>
            <person name="Loveland J."/>
            <person name="Trevanion S."/>
            <person name="Jones M."/>
            <person name="Quail M."/>
            <person name="Willey D."/>
            <person name="Hunt A."/>
            <person name="Burton J."/>
            <person name="Sims S."/>
            <person name="McLay K."/>
            <person name="Plumb B."/>
            <person name="Davis J."/>
            <person name="Clee C."/>
            <person name="Oliver K."/>
            <person name="Clark R."/>
            <person name="Riddle C."/>
            <person name="Elliot D."/>
            <person name="Threadgold G."/>
            <person name="Harden G."/>
            <person name="Ware D."/>
            <person name="Begum S."/>
            <person name="Mortimore B."/>
            <person name="Kerry G."/>
            <person name="Heath P."/>
            <person name="Phillimore B."/>
            <person name="Tracey A."/>
            <person name="Corby N."/>
            <person name="Dunn M."/>
            <person name="Johnson C."/>
            <person name="Wood J."/>
            <person name="Clark S."/>
            <person name="Pelan S."/>
            <person name="Griffiths G."/>
            <person name="Smith M."/>
            <person name="Glithero R."/>
            <person name="Howden P."/>
            <person name="Barker N."/>
            <person name="Lloyd C."/>
            <person name="Stevens C."/>
            <person name="Harley J."/>
            <person name="Holt K."/>
            <person name="Panagiotidis G."/>
            <person name="Lovell J."/>
            <person name="Beasley H."/>
            <person name="Henderson C."/>
            <person name="Gordon D."/>
            <person name="Auger K."/>
            <person name="Wright D."/>
            <person name="Collins J."/>
            <person name="Raisen C."/>
            <person name="Dyer L."/>
            <person name="Leung K."/>
            <person name="Robertson L."/>
            <person name="Ambridge K."/>
            <person name="Leongamornlert D."/>
            <person name="McGuire S."/>
            <person name="Gilderthorp R."/>
            <person name="Griffiths C."/>
            <person name="Manthravadi D."/>
            <person name="Nichol S."/>
            <person name="Barker G."/>
            <person name="Whitehead S."/>
            <person name="Kay M."/>
            <person name="Brown J."/>
            <person name="Murnane C."/>
            <person name="Gray E."/>
            <person name="Humphries M."/>
            <person name="Sycamore N."/>
            <person name="Barker D."/>
            <person name="Saunders D."/>
            <person name="Wallis J."/>
            <person name="Babbage A."/>
            <person name="Hammond S."/>
            <person name="Mashreghi-Mohammadi M."/>
            <person name="Barr L."/>
            <person name="Martin S."/>
            <person name="Wray P."/>
            <person name="Ellington A."/>
            <person name="Matthews N."/>
            <person name="Ellwood M."/>
            <person name="Woodmansey R."/>
            <person name="Clark G."/>
            <person name="Cooper J."/>
            <person name="Tromans A."/>
            <person name="Grafham D."/>
            <person name="Skuce C."/>
            <person name="Pandian R."/>
            <person name="Andrews R."/>
            <person name="Harrison E."/>
            <person name="Kimberley A."/>
            <person name="Garnett J."/>
            <person name="Fosker N."/>
            <person name="Hall R."/>
            <person name="Garner P."/>
            <person name="Kelly D."/>
            <person name="Bird C."/>
            <person name="Palmer S."/>
            <person name="Gehring I."/>
            <person name="Berger A."/>
            <person name="Dooley C.M."/>
            <person name="Ersan-Urun Z."/>
            <person name="Eser C."/>
            <person name="Geiger H."/>
            <person name="Geisler M."/>
            <person name="Karotki L."/>
            <person name="Kirn A."/>
            <person name="Konantz J."/>
            <person name="Konantz M."/>
            <person name="Oberlander M."/>
            <person name="Rudolph-Geiger S."/>
            <person name="Teucke M."/>
            <person name="Lanz C."/>
            <person name="Raddatz G."/>
            <person name="Osoegawa K."/>
            <person name="Zhu B."/>
            <person name="Rapp A."/>
            <person name="Widaa S."/>
            <person name="Langford C."/>
            <person name="Yang F."/>
            <person name="Schuster S.C."/>
            <person name="Carter N.P."/>
            <person name="Harrow J."/>
            <person name="Ning Z."/>
            <person name="Herrero J."/>
            <person name="Searle S.M."/>
            <person name="Enright A."/>
            <person name="Geisler R."/>
            <person name="Plasterk R.H."/>
            <person name="Lee C."/>
            <person name="Westerfield M."/>
            <person name="de Jong P.J."/>
            <person name="Zon L.I."/>
            <person name="Postlethwait J.H."/>
            <person name="Nusslein-Volhard C."/>
            <person name="Hubbard T.J."/>
            <person name="Roest Crollius H."/>
            <person name="Rogers J."/>
            <person name="Stemple D.L."/>
        </authorList>
    </citation>
    <scope>NUCLEOTIDE SEQUENCE [LARGE SCALE GENOMIC DNA]</scope>
    <source>
        <strain>Tuebingen</strain>
    </source>
</reference>
<reference key="2">
    <citation type="submission" date="2006-04" db="EMBL/GenBank/DDBJ databases">
        <authorList>
            <consortium name="NIH - Zebrafish Gene Collection (ZGC) project"/>
        </authorList>
    </citation>
    <scope>NUCLEOTIDE SEQUENCE [LARGE SCALE MRNA]</scope>
</reference>
<proteinExistence type="evidence at transcript level"/>
<comment type="function">
    <text evidence="2">Plasma membrane transporter mediating the uptake by cells of the water soluble vitamin B2/riboflavin that plays a key role in biochemical oxidation-reduction reactions of the carbohydrate, lipid, and amino acid metabolism.</text>
</comment>
<comment type="catalytic activity">
    <reaction evidence="2">
        <text>riboflavin(in) = riboflavin(out)</text>
        <dbReference type="Rhea" id="RHEA:35015"/>
        <dbReference type="ChEBI" id="CHEBI:57986"/>
    </reaction>
</comment>
<comment type="subcellular location">
    <subcellularLocation>
        <location evidence="1">Cell membrane</location>
        <topology evidence="1">Multi-pass membrane protein</topology>
    </subcellularLocation>
</comment>
<comment type="similarity">
    <text evidence="4">Belongs to the riboflavin transporter family.</text>
</comment>
<keyword id="KW-1003">Cell membrane</keyword>
<keyword id="KW-0325">Glycoprotein</keyword>
<keyword id="KW-0472">Membrane</keyword>
<keyword id="KW-1185">Reference proteome</keyword>
<keyword id="KW-0812">Transmembrane</keyword>
<keyword id="KW-1133">Transmembrane helix</keyword>
<keyword id="KW-0813">Transport</keyword>
<gene>
    <name type="primary">slc52a3a</name>
    <name type="synonym">rft2a</name>
    <name type="ORF">si:dkeyp-53e12.7</name>
    <name type="ORF">zgc:136909</name>
</gene>
<evidence type="ECO:0000250" key="1"/>
<evidence type="ECO:0000250" key="2">
    <source>
        <dbReference type="UniProtKB" id="Q9NQ40"/>
    </source>
</evidence>
<evidence type="ECO:0000255" key="3"/>
<evidence type="ECO:0000305" key="4"/>
<accession>B0S5Y3</accession>
<accession>Q1RLR2</accession>
<protein>
    <recommendedName>
        <fullName>Solute carrier family 52, riboflavin transporter, member 3-A</fullName>
    </recommendedName>
    <alternativeName>
        <fullName>Riboflavin transporter 2-A</fullName>
        <shortName>RFT2-A</shortName>
    </alternativeName>
</protein>
<dbReference type="EMBL" id="BX322655">
    <property type="protein sequence ID" value="CAQ14265.1"/>
    <property type="molecule type" value="Genomic_DNA"/>
</dbReference>
<dbReference type="EMBL" id="BC115324">
    <property type="protein sequence ID" value="AAI15325.1"/>
    <property type="molecule type" value="mRNA"/>
</dbReference>
<dbReference type="RefSeq" id="NP_001035447.1">
    <property type="nucleotide sequence ID" value="NM_001040357.1"/>
</dbReference>
<dbReference type="SMR" id="B0S5Y3"/>
<dbReference type="FunCoup" id="B0S5Y3">
    <property type="interactions" value="799"/>
</dbReference>
<dbReference type="STRING" id="7955.ENSDARP00000062715"/>
<dbReference type="GlyCosmos" id="B0S5Y3">
    <property type="glycosylation" value="5 sites, No reported glycans"/>
</dbReference>
<dbReference type="PaxDb" id="7955-ENSDARP00000062715"/>
<dbReference type="GeneID" id="678609"/>
<dbReference type="KEGG" id="dre:678609"/>
<dbReference type="AGR" id="ZFIN:ZDB-GENE-060421-4490"/>
<dbReference type="CTD" id="678609"/>
<dbReference type="ZFIN" id="ZDB-GENE-060421-4490">
    <property type="gene designation" value="slc52a3-1"/>
</dbReference>
<dbReference type="eggNOG" id="KOG4255">
    <property type="taxonomic scope" value="Eukaryota"/>
</dbReference>
<dbReference type="InParanoid" id="B0S5Y3"/>
<dbReference type="OrthoDB" id="9995836at2759"/>
<dbReference type="PhylomeDB" id="B0S5Y3"/>
<dbReference type="TreeFam" id="TF314820"/>
<dbReference type="Reactome" id="R-DRE-196843">
    <property type="pathway name" value="Vitamin B2 (riboflavin) metabolism"/>
</dbReference>
<dbReference type="PRO" id="PR:B0S5Y3"/>
<dbReference type="Proteomes" id="UP000000437">
    <property type="component" value="Chromosome 8"/>
</dbReference>
<dbReference type="GO" id="GO:0005886">
    <property type="term" value="C:plasma membrane"/>
    <property type="evidence" value="ECO:0000318"/>
    <property type="project" value="GO_Central"/>
</dbReference>
<dbReference type="GO" id="GO:0032217">
    <property type="term" value="F:riboflavin transmembrane transporter activity"/>
    <property type="evidence" value="ECO:0000318"/>
    <property type="project" value="GO_Central"/>
</dbReference>
<dbReference type="GO" id="GO:0032218">
    <property type="term" value="P:riboflavin transport"/>
    <property type="evidence" value="ECO:0000318"/>
    <property type="project" value="GO_Central"/>
</dbReference>
<dbReference type="InterPro" id="IPR009357">
    <property type="entry name" value="Riboflavin_transptr"/>
</dbReference>
<dbReference type="PANTHER" id="PTHR12929">
    <property type="entry name" value="SOLUTE CARRIER FAMILY 52"/>
    <property type="match status" value="1"/>
</dbReference>
<dbReference type="PANTHER" id="PTHR12929:SF4">
    <property type="entry name" value="SOLUTE CARRIER FAMILY 52, RIBOFLAVIN TRANSPORTER, MEMBER 3"/>
    <property type="match status" value="1"/>
</dbReference>
<dbReference type="Pfam" id="PF06237">
    <property type="entry name" value="SLC52_ribofla_tr"/>
    <property type="match status" value="1"/>
</dbReference>
<organism>
    <name type="scientific">Danio rerio</name>
    <name type="common">Zebrafish</name>
    <name type="synonym">Brachydanio rerio</name>
    <dbReference type="NCBI Taxonomy" id="7955"/>
    <lineage>
        <taxon>Eukaryota</taxon>
        <taxon>Metazoa</taxon>
        <taxon>Chordata</taxon>
        <taxon>Craniata</taxon>
        <taxon>Vertebrata</taxon>
        <taxon>Euteleostomi</taxon>
        <taxon>Actinopterygii</taxon>
        <taxon>Neopterygii</taxon>
        <taxon>Teleostei</taxon>
        <taxon>Ostariophysi</taxon>
        <taxon>Cypriniformes</taxon>
        <taxon>Danionidae</taxon>
        <taxon>Danioninae</taxon>
        <taxon>Danio</taxon>
    </lineage>
</organism>
<sequence>MPLYIHALACAFGLGSWVSINGLWVELPLIVNVLPEGWDLPSYLTVIIQFANLGPLLVTLAHKFCPGRLRENLAIYAVLSIGVVACILLAVFWNYTTVIFGQPRSTAFFILTFFLALVDCTSSVTFLPFMMQLPAKYITTYFIGEGLSGLVPGLVALAQGVGMSKCVNVTNVSDNVTDPGPSTFIVETQYLPPNFSTEIFFSFLAVMTTISLGAFLILNRLPRTFELSTENLVSDSDAVATVCRGLEDPMDPKTNCPEEVEQKQNEVLLPKPQHSSYQLAFIYVMVLWVNSATNGLLPSVQTFSCMPYGNMAYHLSAALSAVANPVACIIAMFFPKRSLVFLGILCLLGSTFGGYNMAMAAMSPCPLLQDTPLGDAIIVLSWVFFTGLLSYVKVMVGVILRDRSHSALVWCGAAVQTGSLLGSIIMFPLVNVYHLFKSGDICNTNCPL</sequence>
<name>S5A3A_DANRE</name>
<feature type="chain" id="PRO_0000399793" description="Solute carrier family 52, riboflavin transporter, member 3-A">
    <location>
        <begin position="1"/>
        <end position="448"/>
    </location>
</feature>
<feature type="transmembrane region" description="Helical" evidence="3">
    <location>
        <begin position="11"/>
        <end position="31"/>
    </location>
</feature>
<feature type="transmembrane region" description="Helical" evidence="3">
    <location>
        <begin position="40"/>
        <end position="60"/>
    </location>
</feature>
<feature type="transmembrane region" description="Helical" evidence="3">
    <location>
        <begin position="73"/>
        <end position="93"/>
    </location>
</feature>
<feature type="transmembrane region" description="Helical" evidence="3">
    <location>
        <begin position="107"/>
        <end position="127"/>
    </location>
</feature>
<feature type="transmembrane region" description="Helical" evidence="3">
    <location>
        <begin position="138"/>
        <end position="158"/>
    </location>
</feature>
<feature type="transmembrane region" description="Helical" evidence="3">
    <location>
        <begin position="198"/>
        <end position="218"/>
    </location>
</feature>
<feature type="transmembrane region" description="Helical" evidence="3">
    <location>
        <begin position="280"/>
        <end position="300"/>
    </location>
</feature>
<feature type="transmembrane region" description="Helical" evidence="3">
    <location>
        <begin position="315"/>
        <end position="335"/>
    </location>
</feature>
<feature type="transmembrane region" description="Helical" evidence="3">
    <location>
        <begin position="339"/>
        <end position="359"/>
    </location>
</feature>
<feature type="transmembrane region" description="Helical" evidence="3">
    <location>
        <begin position="376"/>
        <end position="396"/>
    </location>
</feature>
<feature type="transmembrane region" description="Helical" evidence="3">
    <location>
        <begin position="407"/>
        <end position="427"/>
    </location>
</feature>
<feature type="glycosylation site" description="N-linked (GlcNAc...) asparagine" evidence="3">
    <location>
        <position position="94"/>
    </location>
</feature>
<feature type="glycosylation site" description="N-linked (GlcNAc...) asparagine" evidence="3">
    <location>
        <position position="168"/>
    </location>
</feature>
<feature type="glycosylation site" description="N-linked (GlcNAc...) asparagine" evidence="3">
    <location>
        <position position="171"/>
    </location>
</feature>
<feature type="glycosylation site" description="N-linked (GlcNAc...) asparagine" evidence="3">
    <location>
        <position position="175"/>
    </location>
</feature>
<feature type="glycosylation site" description="N-linked (GlcNAc...) asparagine" evidence="3">
    <location>
        <position position="194"/>
    </location>
</feature>
<feature type="sequence conflict" description="In Ref. 2; AAI15325." evidence="4" ref="2">
    <original>S</original>
    <variation>P</variation>
    <location>
        <position position="182"/>
    </location>
</feature>
<feature type="sequence conflict" description="In Ref. 2; AAI15325." evidence="4" ref="2">
    <original>D</original>
    <variation>G</variation>
    <location>
        <position position="248"/>
    </location>
</feature>